<sequence>MLVILKETARKLGNVGDVLKVKKGFARNYLIPSGKAVRATRANLAILENSKEKLAAQQAAELETASELAKSFTEIDVLPIYAQAERGVLFGAVSAKQVVAELSKKGIEITTKNVVLGAPIKALGEHEVRIFLHSRVECSLKIHILDASRRGADGTITGTS</sequence>
<comment type="function">
    <text evidence="1">Binds to the 23S rRNA.</text>
</comment>
<comment type="similarity">
    <text evidence="1">Belongs to the bacterial ribosomal protein bL9 family.</text>
</comment>
<feature type="chain" id="PRO_0000236549" description="Large ribosomal subunit protein bL9">
    <location>
        <begin position="1"/>
        <end position="160"/>
    </location>
</feature>
<keyword id="KW-0687">Ribonucleoprotein</keyword>
<keyword id="KW-0689">Ribosomal protein</keyword>
<keyword id="KW-0694">RNA-binding</keyword>
<keyword id="KW-0699">rRNA-binding</keyword>
<accession>Q2GEY5</accession>
<proteinExistence type="inferred from homology"/>
<evidence type="ECO:0000255" key="1">
    <source>
        <dbReference type="HAMAP-Rule" id="MF_00503"/>
    </source>
</evidence>
<evidence type="ECO:0000305" key="2"/>
<gene>
    <name evidence="1" type="primary">rplI</name>
    <name type="ordered locus">NSE_0060</name>
</gene>
<reference key="1">
    <citation type="journal article" date="2006" name="PLoS Genet.">
        <title>Comparative genomics of emerging human ehrlichiosis agents.</title>
        <authorList>
            <person name="Dunning Hotopp J.C."/>
            <person name="Lin M."/>
            <person name="Madupu R."/>
            <person name="Crabtree J."/>
            <person name="Angiuoli S.V."/>
            <person name="Eisen J.A."/>
            <person name="Seshadri R."/>
            <person name="Ren Q."/>
            <person name="Wu M."/>
            <person name="Utterback T.R."/>
            <person name="Smith S."/>
            <person name="Lewis M."/>
            <person name="Khouri H."/>
            <person name="Zhang C."/>
            <person name="Niu H."/>
            <person name="Lin Q."/>
            <person name="Ohashi N."/>
            <person name="Zhi N."/>
            <person name="Nelson W.C."/>
            <person name="Brinkac L.M."/>
            <person name="Dodson R.J."/>
            <person name="Rosovitz M.J."/>
            <person name="Sundaram J.P."/>
            <person name="Daugherty S.C."/>
            <person name="Davidsen T."/>
            <person name="Durkin A.S."/>
            <person name="Gwinn M.L."/>
            <person name="Haft D.H."/>
            <person name="Selengut J.D."/>
            <person name="Sullivan S.A."/>
            <person name="Zafar N."/>
            <person name="Zhou L."/>
            <person name="Benahmed F."/>
            <person name="Forberger H."/>
            <person name="Halpin R."/>
            <person name="Mulligan S."/>
            <person name="Robinson J."/>
            <person name="White O."/>
            <person name="Rikihisa Y."/>
            <person name="Tettelin H."/>
        </authorList>
    </citation>
    <scope>NUCLEOTIDE SEQUENCE [LARGE SCALE GENOMIC DNA]</scope>
    <source>
        <strain>ATCC VR-367 / Miyayama</strain>
    </source>
</reference>
<dbReference type="EMBL" id="CP000237">
    <property type="protein sequence ID" value="ABD45606.1"/>
    <property type="molecule type" value="Genomic_DNA"/>
</dbReference>
<dbReference type="RefSeq" id="WP_011451467.1">
    <property type="nucleotide sequence ID" value="NC_007798.1"/>
</dbReference>
<dbReference type="SMR" id="Q2GEY5"/>
<dbReference type="STRING" id="222891.NSE_0060"/>
<dbReference type="KEGG" id="nse:NSE_0060"/>
<dbReference type="eggNOG" id="COG0359">
    <property type="taxonomic scope" value="Bacteria"/>
</dbReference>
<dbReference type="HOGENOM" id="CLU_078938_3_0_5"/>
<dbReference type="OrthoDB" id="9788336at2"/>
<dbReference type="Proteomes" id="UP000001942">
    <property type="component" value="Chromosome"/>
</dbReference>
<dbReference type="GO" id="GO:1990904">
    <property type="term" value="C:ribonucleoprotein complex"/>
    <property type="evidence" value="ECO:0007669"/>
    <property type="project" value="UniProtKB-KW"/>
</dbReference>
<dbReference type="GO" id="GO:0005840">
    <property type="term" value="C:ribosome"/>
    <property type="evidence" value="ECO:0007669"/>
    <property type="project" value="UniProtKB-KW"/>
</dbReference>
<dbReference type="GO" id="GO:0019843">
    <property type="term" value="F:rRNA binding"/>
    <property type="evidence" value="ECO:0007669"/>
    <property type="project" value="UniProtKB-UniRule"/>
</dbReference>
<dbReference type="GO" id="GO:0003735">
    <property type="term" value="F:structural constituent of ribosome"/>
    <property type="evidence" value="ECO:0007669"/>
    <property type="project" value="InterPro"/>
</dbReference>
<dbReference type="GO" id="GO:0006412">
    <property type="term" value="P:translation"/>
    <property type="evidence" value="ECO:0007669"/>
    <property type="project" value="UniProtKB-UniRule"/>
</dbReference>
<dbReference type="Gene3D" id="3.10.430.100">
    <property type="entry name" value="Ribosomal protein L9, C-terminal domain"/>
    <property type="match status" value="1"/>
</dbReference>
<dbReference type="Gene3D" id="3.40.5.10">
    <property type="entry name" value="Ribosomal protein L9, N-terminal domain"/>
    <property type="match status" value="1"/>
</dbReference>
<dbReference type="HAMAP" id="MF_00503">
    <property type="entry name" value="Ribosomal_bL9"/>
    <property type="match status" value="1"/>
</dbReference>
<dbReference type="InterPro" id="IPR000244">
    <property type="entry name" value="Ribosomal_bL9"/>
</dbReference>
<dbReference type="InterPro" id="IPR009027">
    <property type="entry name" value="Ribosomal_bL9/RNase_H1_N"/>
</dbReference>
<dbReference type="InterPro" id="IPR020594">
    <property type="entry name" value="Ribosomal_bL9_bac/chp"/>
</dbReference>
<dbReference type="InterPro" id="IPR020069">
    <property type="entry name" value="Ribosomal_bL9_C"/>
</dbReference>
<dbReference type="InterPro" id="IPR036791">
    <property type="entry name" value="Ribosomal_bL9_C_sf"/>
</dbReference>
<dbReference type="InterPro" id="IPR020070">
    <property type="entry name" value="Ribosomal_bL9_N"/>
</dbReference>
<dbReference type="InterPro" id="IPR036935">
    <property type="entry name" value="Ribosomal_bL9_N_sf"/>
</dbReference>
<dbReference type="NCBIfam" id="TIGR00158">
    <property type="entry name" value="L9"/>
    <property type="match status" value="1"/>
</dbReference>
<dbReference type="PANTHER" id="PTHR21368">
    <property type="entry name" value="50S RIBOSOMAL PROTEIN L9"/>
    <property type="match status" value="1"/>
</dbReference>
<dbReference type="Pfam" id="PF03948">
    <property type="entry name" value="Ribosomal_L9_C"/>
    <property type="match status" value="1"/>
</dbReference>
<dbReference type="Pfam" id="PF01281">
    <property type="entry name" value="Ribosomal_L9_N"/>
    <property type="match status" value="1"/>
</dbReference>
<dbReference type="SUPFAM" id="SSF55658">
    <property type="entry name" value="L9 N-domain-like"/>
    <property type="match status" value="1"/>
</dbReference>
<dbReference type="SUPFAM" id="SSF55653">
    <property type="entry name" value="Ribosomal protein L9 C-domain"/>
    <property type="match status" value="1"/>
</dbReference>
<dbReference type="PROSITE" id="PS00651">
    <property type="entry name" value="RIBOSOMAL_L9"/>
    <property type="match status" value="1"/>
</dbReference>
<organism>
    <name type="scientific">Neorickettsia sennetsu (strain ATCC VR-367 / Miyayama)</name>
    <name type="common">Ehrlichia sennetsu</name>
    <dbReference type="NCBI Taxonomy" id="222891"/>
    <lineage>
        <taxon>Bacteria</taxon>
        <taxon>Pseudomonadati</taxon>
        <taxon>Pseudomonadota</taxon>
        <taxon>Alphaproteobacteria</taxon>
        <taxon>Rickettsiales</taxon>
        <taxon>Anaplasmataceae</taxon>
        <taxon>Neorickettsia</taxon>
    </lineage>
</organism>
<protein>
    <recommendedName>
        <fullName evidence="1">Large ribosomal subunit protein bL9</fullName>
    </recommendedName>
    <alternativeName>
        <fullName evidence="2">50S ribosomal protein L9</fullName>
    </alternativeName>
</protein>
<name>RL9_NEOSM</name>